<accession>A8FRQ4</accession>
<feature type="chain" id="PRO_1000083247" description="Protein SlyX homolog">
    <location>
        <begin position="1"/>
        <end position="70"/>
    </location>
</feature>
<keyword id="KW-1185">Reference proteome</keyword>
<protein>
    <recommendedName>
        <fullName evidence="1">Protein SlyX homolog</fullName>
    </recommendedName>
</protein>
<reference key="1">
    <citation type="submission" date="2007-08" db="EMBL/GenBank/DDBJ databases">
        <title>Complete sequence of Shewanella sediminis HAW-EB3.</title>
        <authorList>
            <consortium name="US DOE Joint Genome Institute"/>
            <person name="Copeland A."/>
            <person name="Lucas S."/>
            <person name="Lapidus A."/>
            <person name="Barry K."/>
            <person name="Glavina del Rio T."/>
            <person name="Dalin E."/>
            <person name="Tice H."/>
            <person name="Pitluck S."/>
            <person name="Chertkov O."/>
            <person name="Brettin T."/>
            <person name="Bruce D."/>
            <person name="Detter J.C."/>
            <person name="Han C."/>
            <person name="Schmutz J."/>
            <person name="Larimer F."/>
            <person name="Land M."/>
            <person name="Hauser L."/>
            <person name="Kyrpides N."/>
            <person name="Kim E."/>
            <person name="Zhao J.-S."/>
            <person name="Richardson P."/>
        </authorList>
    </citation>
    <scope>NUCLEOTIDE SEQUENCE [LARGE SCALE GENOMIC DNA]</scope>
    <source>
        <strain>HAW-EB3</strain>
    </source>
</reference>
<evidence type="ECO:0000255" key="1">
    <source>
        <dbReference type="HAMAP-Rule" id="MF_00715"/>
    </source>
</evidence>
<name>SLYX_SHESH</name>
<gene>
    <name evidence="1" type="primary">slyX</name>
    <name type="ordered locus">Ssed_0916</name>
</gene>
<comment type="similarity">
    <text evidence="1">Belongs to the SlyX family.</text>
</comment>
<sequence length="70" mass="8152">MDQLERRIEDLEMKLAFQEGTIEELDQQVIKLNDLMAAQQQQLRILITKLQSVEPSNMANQSEESPPPHY</sequence>
<dbReference type="EMBL" id="CP000821">
    <property type="protein sequence ID" value="ABV35527.1"/>
    <property type="molecule type" value="Genomic_DNA"/>
</dbReference>
<dbReference type="RefSeq" id="WP_012141263.1">
    <property type="nucleotide sequence ID" value="NC_009831.1"/>
</dbReference>
<dbReference type="SMR" id="A8FRQ4"/>
<dbReference type="STRING" id="425104.Ssed_0916"/>
<dbReference type="KEGG" id="sse:Ssed_0916"/>
<dbReference type="eggNOG" id="COG2900">
    <property type="taxonomic scope" value="Bacteria"/>
</dbReference>
<dbReference type="HOGENOM" id="CLU_180796_4_0_6"/>
<dbReference type="OrthoDB" id="5771733at2"/>
<dbReference type="Proteomes" id="UP000002015">
    <property type="component" value="Chromosome"/>
</dbReference>
<dbReference type="Gene3D" id="1.20.5.300">
    <property type="match status" value="1"/>
</dbReference>
<dbReference type="HAMAP" id="MF_00715">
    <property type="entry name" value="SlyX"/>
    <property type="match status" value="1"/>
</dbReference>
<dbReference type="InterPro" id="IPR007236">
    <property type="entry name" value="SlyX"/>
</dbReference>
<dbReference type="PANTHER" id="PTHR36508">
    <property type="entry name" value="PROTEIN SLYX"/>
    <property type="match status" value="1"/>
</dbReference>
<dbReference type="PANTHER" id="PTHR36508:SF1">
    <property type="entry name" value="PROTEIN SLYX"/>
    <property type="match status" value="1"/>
</dbReference>
<dbReference type="Pfam" id="PF04102">
    <property type="entry name" value="SlyX"/>
    <property type="match status" value="1"/>
</dbReference>
<organism>
    <name type="scientific">Shewanella sediminis (strain HAW-EB3)</name>
    <dbReference type="NCBI Taxonomy" id="425104"/>
    <lineage>
        <taxon>Bacteria</taxon>
        <taxon>Pseudomonadati</taxon>
        <taxon>Pseudomonadota</taxon>
        <taxon>Gammaproteobacteria</taxon>
        <taxon>Alteromonadales</taxon>
        <taxon>Shewanellaceae</taxon>
        <taxon>Shewanella</taxon>
    </lineage>
</organism>
<proteinExistence type="inferred from homology"/>